<sequence length="576" mass="65540">MPALATGSACDMGLYELLAALPAQLQPHVDSQEDLTFLWDVFGEKSLHSLVKIHEKLHCYEKQNPLPILHGAAALADDLTEELQNKLPNSEIRELLKLLSKPNVKALLSVHDTVAQKSYDPVLPPVPDDIDDEEDSVKIIRLVKNSEPLGATIKKDEQTGAITVARIMRGGAADRSGLIHVGDELREVNGIPVEDKRPEEIIKILSQSKGAITFKIIPSTKEETPSKEGKIFIKALFDYDPKEDKAIPCKEAGLSFRKGDILQIMSQDDVTWWQAKHEGDANPRAGLIPSKHFQERRLALRRPEIVVQPLKLSNTKSSGFRRSFRLSRKNKKINKSMYECKKSEQYDTADVPTYEEVTPYRRQIHDKYRLIVLVGPVGVGLNELKRKLLMSDAQHYGVIVPHTTRARRSQESDGVEYIFISKHLFETDVQINKFIEYGEYKNNYYGTSIDSVRSVLAKNKVCLLDVQPHTVKHLRTLEFKPYVIFIKPPSIERLRETRKNAKIISSRDDQGTAKPFTEEDFQEMIKSAQIMESQYGHLFDKIIINDDLTVAFNELKTTFDKLETDTHWVPVSWLHS</sequence>
<dbReference type="EMBL" id="AK017344">
    <property type="protein sequence ID" value="BAB30699.1"/>
    <property type="molecule type" value="mRNA"/>
</dbReference>
<dbReference type="EMBL" id="AK033081">
    <property type="protein sequence ID" value="BAC28146.1"/>
    <property type="molecule type" value="mRNA"/>
</dbReference>
<dbReference type="EMBL" id="AK078849">
    <property type="protein sequence ID" value="BAC37419.1"/>
    <property type="molecule type" value="mRNA"/>
</dbReference>
<dbReference type="EMBL" id="AC139324">
    <property type="status" value="NOT_ANNOTATED_CDS"/>
    <property type="molecule type" value="Genomic_DNA"/>
</dbReference>
<dbReference type="EMBL" id="AC138529">
    <property type="status" value="NOT_ANNOTATED_CDS"/>
    <property type="molecule type" value="Genomic_DNA"/>
</dbReference>
<dbReference type="EMBL" id="BC117550">
    <property type="protein sequence ID" value="AAI17551.1"/>
    <property type="molecule type" value="mRNA"/>
</dbReference>
<dbReference type="EMBL" id="BC118058">
    <property type="protein sequence ID" value="AAI18059.1"/>
    <property type="molecule type" value="mRNA"/>
</dbReference>
<dbReference type="CCDS" id="CCDS50217.1">
    <molecule id="Q8BVD5-1"/>
</dbReference>
<dbReference type="CCDS" id="CCDS89187.1">
    <molecule id="Q8BVD5-2"/>
</dbReference>
<dbReference type="RefSeq" id="NP_001074756.2">
    <property type="nucleotide sequence ID" value="NM_001081287.2"/>
</dbReference>
<dbReference type="RefSeq" id="NP_001155092.1">
    <molecule id="Q8BVD5-2"/>
    <property type="nucleotide sequence ID" value="NM_001161620.1"/>
</dbReference>
<dbReference type="SMR" id="Q8BVD5"/>
<dbReference type="BioGRID" id="217704">
    <property type="interactions" value="3"/>
</dbReference>
<dbReference type="FunCoup" id="Q8BVD5">
    <property type="interactions" value="319"/>
</dbReference>
<dbReference type="STRING" id="10090.ENSMUSP00000111535"/>
<dbReference type="iPTMnet" id="Q8BVD5"/>
<dbReference type="PhosphoSitePlus" id="Q8BVD5"/>
<dbReference type="jPOST" id="Q8BVD5"/>
<dbReference type="PaxDb" id="10090-ENSMUSP00000111535"/>
<dbReference type="PeptideAtlas" id="Q8BVD5"/>
<dbReference type="ProteomicsDB" id="291492">
    <molecule id="Q8BVD5-1"/>
</dbReference>
<dbReference type="ProteomicsDB" id="291493">
    <molecule id="Q8BVD5-2"/>
</dbReference>
<dbReference type="ProteomicsDB" id="291494">
    <molecule id="Q8BVD5-3"/>
</dbReference>
<dbReference type="ProteomicsDB" id="291495">
    <molecule id="Q8BVD5-4"/>
</dbReference>
<dbReference type="ProteomicsDB" id="291496">
    <molecule id="Q8BVD5-5"/>
</dbReference>
<dbReference type="Pumba" id="Q8BVD5"/>
<dbReference type="Antibodypedia" id="26125">
    <property type="antibodies" value="103 antibodies from 24 providers"/>
</dbReference>
<dbReference type="DNASU" id="75739"/>
<dbReference type="Ensembl" id="ENSMUST00000234510.2">
    <molecule id="Q8BVD5-5"/>
    <property type="protein sequence ID" value="ENSMUSP00000157260.2"/>
    <property type="gene ID" value="ENSMUSG00000057440.9"/>
</dbReference>
<dbReference type="Ensembl" id="ENSMUST00000234571.2">
    <molecule id="Q8BVD5-2"/>
    <property type="protein sequence ID" value="ENSMUSP00000157306.2"/>
    <property type="gene ID" value="ENSMUSG00000057440.9"/>
</dbReference>
<dbReference type="GeneID" id="75739"/>
<dbReference type="KEGG" id="mmu:75739"/>
<dbReference type="UCSC" id="uc008dzt.1">
    <molecule id="Q8BVD5-2"/>
    <property type="organism name" value="mouse"/>
</dbReference>
<dbReference type="UCSC" id="uc008dzu.1">
    <molecule id="Q8BVD5-1"/>
    <property type="organism name" value="mouse"/>
</dbReference>
<dbReference type="UCSC" id="uc008dzv.1">
    <molecule id="Q8BVD5-5"/>
    <property type="organism name" value="mouse"/>
</dbReference>
<dbReference type="UCSC" id="uc008dzx.1">
    <molecule id="Q8BVD5-4"/>
    <property type="organism name" value="mouse"/>
</dbReference>
<dbReference type="AGR" id="MGI:1922989"/>
<dbReference type="CTD" id="143098"/>
<dbReference type="MGI" id="MGI:1922989">
    <property type="gene designation" value="Mpp7"/>
</dbReference>
<dbReference type="VEuPathDB" id="HostDB:ENSMUSG00000057440"/>
<dbReference type="eggNOG" id="KOG0609">
    <property type="taxonomic scope" value="Eukaryota"/>
</dbReference>
<dbReference type="GeneTree" id="ENSGT00940000156232"/>
<dbReference type="InParanoid" id="Q8BVD5"/>
<dbReference type="OrthoDB" id="439127at2759"/>
<dbReference type="PhylomeDB" id="Q8BVD5"/>
<dbReference type="Reactome" id="R-MMU-9013149">
    <property type="pathway name" value="RAC1 GTPase cycle"/>
</dbReference>
<dbReference type="Reactome" id="R-MMU-9013404">
    <property type="pathway name" value="RAC2 GTPase cycle"/>
</dbReference>
<dbReference type="Reactome" id="R-MMU-9013406">
    <property type="pathway name" value="RHOQ GTPase cycle"/>
</dbReference>
<dbReference type="Reactome" id="R-MMU-9013408">
    <property type="pathway name" value="RHOG GTPase cycle"/>
</dbReference>
<dbReference type="Reactome" id="R-MMU-9013423">
    <property type="pathway name" value="RAC3 GTPase cycle"/>
</dbReference>
<dbReference type="BioGRID-ORCS" id="75739">
    <property type="hits" value="0 hits in 77 CRISPR screens"/>
</dbReference>
<dbReference type="ChiTaRS" id="Mpp7">
    <property type="organism name" value="mouse"/>
</dbReference>
<dbReference type="PRO" id="PR:Q8BVD5"/>
<dbReference type="Proteomes" id="UP000000589">
    <property type="component" value="Chromosome 18"/>
</dbReference>
<dbReference type="RNAct" id="Q8BVD5">
    <property type="molecule type" value="protein"/>
</dbReference>
<dbReference type="Bgee" id="ENSMUSG00000057440">
    <property type="expression patterns" value="Expressed in seminal vesicle and 232 other cell types or tissues"/>
</dbReference>
<dbReference type="ExpressionAtlas" id="Q8BVD5">
    <property type="expression patterns" value="baseline and differential"/>
</dbReference>
<dbReference type="GO" id="GO:0005912">
    <property type="term" value="C:adherens junction"/>
    <property type="evidence" value="ECO:0000250"/>
    <property type="project" value="BHF-UCL"/>
</dbReference>
<dbReference type="GO" id="GO:0005923">
    <property type="term" value="C:bicellular tight junction"/>
    <property type="evidence" value="ECO:0000250"/>
    <property type="project" value="BHF-UCL"/>
</dbReference>
<dbReference type="GO" id="GO:0005938">
    <property type="term" value="C:cell cortex"/>
    <property type="evidence" value="ECO:0007669"/>
    <property type="project" value="UniProtKB-SubCell"/>
</dbReference>
<dbReference type="GO" id="GO:0016328">
    <property type="term" value="C:lateral plasma membrane"/>
    <property type="evidence" value="ECO:0007669"/>
    <property type="project" value="UniProtKB-SubCell"/>
</dbReference>
<dbReference type="GO" id="GO:0097025">
    <property type="term" value="C:MPP7-DLG1-LIN7 complex"/>
    <property type="evidence" value="ECO:0000250"/>
    <property type="project" value="BHF-UCL"/>
</dbReference>
<dbReference type="GO" id="GO:0060090">
    <property type="term" value="F:molecular adaptor activity"/>
    <property type="evidence" value="ECO:0000250"/>
    <property type="project" value="BHF-UCL"/>
</dbReference>
<dbReference type="GO" id="GO:0019904">
    <property type="term" value="F:protein domain specific binding"/>
    <property type="evidence" value="ECO:0000250"/>
    <property type="project" value="BHF-UCL"/>
</dbReference>
<dbReference type="GO" id="GO:0070830">
    <property type="term" value="P:bicellular tight junction assembly"/>
    <property type="evidence" value="ECO:0000250"/>
    <property type="project" value="BHF-UCL"/>
</dbReference>
<dbReference type="GO" id="GO:0031334">
    <property type="term" value="P:positive regulation of protein-containing complex assembly"/>
    <property type="evidence" value="ECO:0000250"/>
    <property type="project" value="BHF-UCL"/>
</dbReference>
<dbReference type="GO" id="GO:0071896">
    <property type="term" value="P:protein localization to adherens junction"/>
    <property type="evidence" value="ECO:0000250"/>
    <property type="project" value="BHF-UCL"/>
</dbReference>
<dbReference type="CDD" id="cd00071">
    <property type="entry name" value="GMPK"/>
    <property type="match status" value="1"/>
</dbReference>
<dbReference type="CDD" id="cd06799">
    <property type="entry name" value="PDZ_MPP3-MPP4-MPP7-like"/>
    <property type="match status" value="1"/>
</dbReference>
<dbReference type="CDD" id="cd12033">
    <property type="entry name" value="SH3_MPP7"/>
    <property type="match status" value="1"/>
</dbReference>
<dbReference type="FunFam" id="2.30.30.40:FF:000159">
    <property type="entry name" value="MAGUK p55 subfamily member 7"/>
    <property type="match status" value="1"/>
</dbReference>
<dbReference type="FunFam" id="2.30.42.10:FF:000046">
    <property type="entry name" value="MAGUK p55 subfamily member 7"/>
    <property type="match status" value="1"/>
</dbReference>
<dbReference type="FunFam" id="3.40.50.300:FF:000757">
    <property type="entry name" value="MAGUK p55 subfamily member 7"/>
    <property type="match status" value="1"/>
</dbReference>
<dbReference type="Gene3D" id="2.30.42.10">
    <property type="match status" value="1"/>
</dbReference>
<dbReference type="Gene3D" id="1.10.287.650">
    <property type="entry name" value="L27 domain"/>
    <property type="match status" value="1"/>
</dbReference>
<dbReference type="Gene3D" id="3.40.50.300">
    <property type="entry name" value="P-loop containing nucleotide triphosphate hydrolases"/>
    <property type="match status" value="1"/>
</dbReference>
<dbReference type="Gene3D" id="2.30.30.40">
    <property type="entry name" value="SH3 Domains"/>
    <property type="match status" value="1"/>
</dbReference>
<dbReference type="InterPro" id="IPR008145">
    <property type="entry name" value="GK/Ca_channel_bsu"/>
</dbReference>
<dbReference type="InterPro" id="IPR008144">
    <property type="entry name" value="Guanylate_kin-like_dom"/>
</dbReference>
<dbReference type="InterPro" id="IPR020590">
    <property type="entry name" value="Guanylate_kinase_CS"/>
</dbReference>
<dbReference type="InterPro" id="IPR014775">
    <property type="entry name" value="L27_C"/>
</dbReference>
<dbReference type="InterPro" id="IPR004172">
    <property type="entry name" value="L27_dom"/>
</dbReference>
<dbReference type="InterPro" id="IPR036892">
    <property type="entry name" value="L27_dom_sf"/>
</dbReference>
<dbReference type="InterPro" id="IPR050716">
    <property type="entry name" value="MAGUK"/>
</dbReference>
<dbReference type="InterPro" id="IPR035599">
    <property type="entry name" value="MPP7_SH3"/>
</dbReference>
<dbReference type="InterPro" id="IPR027417">
    <property type="entry name" value="P-loop_NTPase"/>
</dbReference>
<dbReference type="InterPro" id="IPR001478">
    <property type="entry name" value="PDZ"/>
</dbReference>
<dbReference type="InterPro" id="IPR036034">
    <property type="entry name" value="PDZ_sf"/>
</dbReference>
<dbReference type="InterPro" id="IPR036028">
    <property type="entry name" value="SH3-like_dom_sf"/>
</dbReference>
<dbReference type="InterPro" id="IPR001452">
    <property type="entry name" value="SH3_domain"/>
</dbReference>
<dbReference type="PANTHER" id="PTHR23122">
    <property type="entry name" value="MEMBRANE-ASSOCIATED GUANYLATE KINASE MAGUK"/>
    <property type="match status" value="1"/>
</dbReference>
<dbReference type="Pfam" id="PF00625">
    <property type="entry name" value="Guanylate_kin"/>
    <property type="match status" value="1"/>
</dbReference>
<dbReference type="Pfam" id="PF02828">
    <property type="entry name" value="L27"/>
    <property type="match status" value="2"/>
</dbReference>
<dbReference type="Pfam" id="PF00595">
    <property type="entry name" value="PDZ"/>
    <property type="match status" value="1"/>
</dbReference>
<dbReference type="Pfam" id="PF07653">
    <property type="entry name" value="SH3_2"/>
    <property type="match status" value="1"/>
</dbReference>
<dbReference type="PRINTS" id="PR00452">
    <property type="entry name" value="SH3DOMAIN"/>
</dbReference>
<dbReference type="SMART" id="SM00072">
    <property type="entry name" value="GuKc"/>
    <property type="match status" value="1"/>
</dbReference>
<dbReference type="SMART" id="SM00569">
    <property type="entry name" value="L27"/>
    <property type="match status" value="2"/>
</dbReference>
<dbReference type="SMART" id="SM00228">
    <property type="entry name" value="PDZ"/>
    <property type="match status" value="1"/>
</dbReference>
<dbReference type="SMART" id="SM00326">
    <property type="entry name" value="SH3"/>
    <property type="match status" value="1"/>
</dbReference>
<dbReference type="SUPFAM" id="SSF101288">
    <property type="entry name" value="L27 domain"/>
    <property type="match status" value="1"/>
</dbReference>
<dbReference type="SUPFAM" id="SSF52540">
    <property type="entry name" value="P-loop containing nucleoside triphosphate hydrolases"/>
    <property type="match status" value="1"/>
</dbReference>
<dbReference type="SUPFAM" id="SSF50156">
    <property type="entry name" value="PDZ domain-like"/>
    <property type="match status" value="1"/>
</dbReference>
<dbReference type="SUPFAM" id="SSF50044">
    <property type="entry name" value="SH3-domain"/>
    <property type="match status" value="1"/>
</dbReference>
<dbReference type="PROSITE" id="PS00856">
    <property type="entry name" value="GUANYLATE_KINASE_1"/>
    <property type="match status" value="1"/>
</dbReference>
<dbReference type="PROSITE" id="PS50052">
    <property type="entry name" value="GUANYLATE_KINASE_2"/>
    <property type="match status" value="1"/>
</dbReference>
<dbReference type="PROSITE" id="PS51022">
    <property type="entry name" value="L27"/>
    <property type="match status" value="2"/>
</dbReference>
<dbReference type="PROSITE" id="PS50106">
    <property type="entry name" value="PDZ"/>
    <property type="match status" value="1"/>
</dbReference>
<dbReference type="PROSITE" id="PS50002">
    <property type="entry name" value="SH3"/>
    <property type="match status" value="1"/>
</dbReference>
<name>MPP7_MOUSE</name>
<accession>Q8BVD5</accession>
<accession>Q148N6</accession>
<accession>Q8BZZ8</accession>
<accession>Q9D3K2</accession>
<evidence type="ECO:0000250" key="1"/>
<evidence type="ECO:0000250" key="2">
    <source>
        <dbReference type="UniProtKB" id="Q5T2T1"/>
    </source>
</evidence>
<evidence type="ECO:0000255" key="3">
    <source>
        <dbReference type="PROSITE-ProRule" id="PRU00100"/>
    </source>
</evidence>
<evidence type="ECO:0000255" key="4">
    <source>
        <dbReference type="PROSITE-ProRule" id="PRU00143"/>
    </source>
</evidence>
<evidence type="ECO:0000255" key="5">
    <source>
        <dbReference type="PROSITE-ProRule" id="PRU00192"/>
    </source>
</evidence>
<evidence type="ECO:0000255" key="6">
    <source>
        <dbReference type="PROSITE-ProRule" id="PRU00365"/>
    </source>
</evidence>
<evidence type="ECO:0000303" key="7">
    <source>
    </source>
</evidence>
<evidence type="ECO:0000303" key="8">
    <source>
    </source>
</evidence>
<evidence type="ECO:0000305" key="9"/>
<evidence type="ECO:0007744" key="10">
    <source>
    </source>
</evidence>
<keyword id="KW-0025">Alternative splicing</keyword>
<keyword id="KW-0965">Cell junction</keyword>
<keyword id="KW-1003">Cell membrane</keyword>
<keyword id="KW-0963">Cytoplasm</keyword>
<keyword id="KW-0472">Membrane</keyword>
<keyword id="KW-0597">Phosphoprotein</keyword>
<keyword id="KW-1185">Reference proteome</keyword>
<keyword id="KW-0677">Repeat</keyword>
<keyword id="KW-0728">SH3 domain</keyword>
<keyword id="KW-0796">Tight junction</keyword>
<organism>
    <name type="scientific">Mus musculus</name>
    <name type="common">Mouse</name>
    <dbReference type="NCBI Taxonomy" id="10090"/>
    <lineage>
        <taxon>Eukaryota</taxon>
        <taxon>Metazoa</taxon>
        <taxon>Chordata</taxon>
        <taxon>Craniata</taxon>
        <taxon>Vertebrata</taxon>
        <taxon>Euteleostomi</taxon>
        <taxon>Mammalia</taxon>
        <taxon>Eutheria</taxon>
        <taxon>Euarchontoglires</taxon>
        <taxon>Glires</taxon>
        <taxon>Rodentia</taxon>
        <taxon>Myomorpha</taxon>
        <taxon>Muroidea</taxon>
        <taxon>Muridae</taxon>
        <taxon>Murinae</taxon>
        <taxon>Mus</taxon>
        <taxon>Mus</taxon>
    </lineage>
</organism>
<feature type="chain" id="PRO_0000320028" description="MAGUK p55 subfamily member 7">
    <location>
        <begin position="1"/>
        <end position="576"/>
    </location>
</feature>
<feature type="domain" description="L27 1" evidence="6">
    <location>
        <begin position="10"/>
        <end position="64"/>
    </location>
</feature>
<feature type="domain" description="L27 2" evidence="6">
    <location>
        <begin position="65"/>
        <end position="122"/>
    </location>
</feature>
<feature type="domain" description="PDZ" evidence="4">
    <location>
        <begin position="139"/>
        <end position="220"/>
    </location>
</feature>
<feature type="domain" description="SH3" evidence="5">
    <location>
        <begin position="228"/>
        <end position="298"/>
    </location>
</feature>
<feature type="domain" description="Guanylate kinase-like" evidence="3">
    <location>
        <begin position="368"/>
        <end position="560"/>
    </location>
</feature>
<feature type="region of interest" description="Phospho-regulated basic and hydrophobic (PRBH) motif" evidence="2">
    <location>
        <begin position="289"/>
        <end position="383"/>
    </location>
</feature>
<feature type="modified residue" description="Phosphoserine" evidence="10">
    <location>
        <position position="409"/>
    </location>
</feature>
<feature type="splice variant" id="VSP_031574" description="In isoform 3." evidence="7">
    <location>
        <position position="308"/>
    </location>
</feature>
<feature type="splice variant" id="VSP_031575" description="In isoform 4." evidence="8">
    <original>SGFRRSFRL</original>
    <variation>CKFVNKNTQ</variation>
    <location>
        <begin position="318"/>
        <end position="326"/>
    </location>
</feature>
<feature type="splice variant" id="VSP_031576" description="In isoform 5." evidence="8">
    <original>SGFR</original>
    <variation>FPFT</variation>
    <location>
        <begin position="318"/>
        <end position="321"/>
    </location>
</feature>
<feature type="splice variant" id="VSP_031577" description="In isoform 5." evidence="8">
    <location>
        <begin position="322"/>
        <end position="576"/>
    </location>
</feature>
<feature type="splice variant" id="VSP_031578" description="In isoform 4." evidence="8">
    <location>
        <begin position="327"/>
        <end position="576"/>
    </location>
</feature>
<feature type="splice variant" id="VSP_031579" description="In isoform 2 and isoform 3." evidence="7 8">
    <original>HTTRARRSQESDGVEYIFISKHLFET</original>
    <variation>REFSGPWWFSEDISKLSEQLKKLTLC</variation>
    <location>
        <begin position="402"/>
        <end position="427"/>
    </location>
</feature>
<feature type="splice variant" id="VSP_031580" description="In isoform 2 and isoform 3." evidence="7 8">
    <location>
        <begin position="428"/>
        <end position="576"/>
    </location>
</feature>
<reference key="1">
    <citation type="journal article" date="2005" name="Science">
        <title>The transcriptional landscape of the mammalian genome.</title>
        <authorList>
            <person name="Carninci P."/>
            <person name="Kasukawa T."/>
            <person name="Katayama S."/>
            <person name="Gough J."/>
            <person name="Frith M.C."/>
            <person name="Maeda N."/>
            <person name="Oyama R."/>
            <person name="Ravasi T."/>
            <person name="Lenhard B."/>
            <person name="Wells C."/>
            <person name="Kodzius R."/>
            <person name="Shimokawa K."/>
            <person name="Bajic V.B."/>
            <person name="Brenner S.E."/>
            <person name="Batalov S."/>
            <person name="Forrest A.R."/>
            <person name="Zavolan M."/>
            <person name="Davis M.J."/>
            <person name="Wilming L.G."/>
            <person name="Aidinis V."/>
            <person name="Allen J.E."/>
            <person name="Ambesi-Impiombato A."/>
            <person name="Apweiler R."/>
            <person name="Aturaliya R.N."/>
            <person name="Bailey T.L."/>
            <person name="Bansal M."/>
            <person name="Baxter L."/>
            <person name="Beisel K.W."/>
            <person name="Bersano T."/>
            <person name="Bono H."/>
            <person name="Chalk A.M."/>
            <person name="Chiu K.P."/>
            <person name="Choudhary V."/>
            <person name="Christoffels A."/>
            <person name="Clutterbuck D.R."/>
            <person name="Crowe M.L."/>
            <person name="Dalla E."/>
            <person name="Dalrymple B.P."/>
            <person name="de Bono B."/>
            <person name="Della Gatta G."/>
            <person name="di Bernardo D."/>
            <person name="Down T."/>
            <person name="Engstrom P."/>
            <person name="Fagiolini M."/>
            <person name="Faulkner G."/>
            <person name="Fletcher C.F."/>
            <person name="Fukushima T."/>
            <person name="Furuno M."/>
            <person name="Futaki S."/>
            <person name="Gariboldi M."/>
            <person name="Georgii-Hemming P."/>
            <person name="Gingeras T.R."/>
            <person name="Gojobori T."/>
            <person name="Green R.E."/>
            <person name="Gustincich S."/>
            <person name="Harbers M."/>
            <person name="Hayashi Y."/>
            <person name="Hensch T.K."/>
            <person name="Hirokawa N."/>
            <person name="Hill D."/>
            <person name="Huminiecki L."/>
            <person name="Iacono M."/>
            <person name="Ikeo K."/>
            <person name="Iwama A."/>
            <person name="Ishikawa T."/>
            <person name="Jakt M."/>
            <person name="Kanapin A."/>
            <person name="Katoh M."/>
            <person name="Kawasawa Y."/>
            <person name="Kelso J."/>
            <person name="Kitamura H."/>
            <person name="Kitano H."/>
            <person name="Kollias G."/>
            <person name="Krishnan S.P."/>
            <person name="Kruger A."/>
            <person name="Kummerfeld S.K."/>
            <person name="Kurochkin I.V."/>
            <person name="Lareau L.F."/>
            <person name="Lazarevic D."/>
            <person name="Lipovich L."/>
            <person name="Liu J."/>
            <person name="Liuni S."/>
            <person name="McWilliam S."/>
            <person name="Madan Babu M."/>
            <person name="Madera M."/>
            <person name="Marchionni L."/>
            <person name="Matsuda H."/>
            <person name="Matsuzawa S."/>
            <person name="Miki H."/>
            <person name="Mignone F."/>
            <person name="Miyake S."/>
            <person name="Morris K."/>
            <person name="Mottagui-Tabar S."/>
            <person name="Mulder N."/>
            <person name="Nakano N."/>
            <person name="Nakauchi H."/>
            <person name="Ng P."/>
            <person name="Nilsson R."/>
            <person name="Nishiguchi S."/>
            <person name="Nishikawa S."/>
            <person name="Nori F."/>
            <person name="Ohara O."/>
            <person name="Okazaki Y."/>
            <person name="Orlando V."/>
            <person name="Pang K.C."/>
            <person name="Pavan W.J."/>
            <person name="Pavesi G."/>
            <person name="Pesole G."/>
            <person name="Petrovsky N."/>
            <person name="Piazza S."/>
            <person name="Reed J."/>
            <person name="Reid J.F."/>
            <person name="Ring B.Z."/>
            <person name="Ringwald M."/>
            <person name="Rost B."/>
            <person name="Ruan Y."/>
            <person name="Salzberg S.L."/>
            <person name="Sandelin A."/>
            <person name="Schneider C."/>
            <person name="Schoenbach C."/>
            <person name="Sekiguchi K."/>
            <person name="Semple C.A."/>
            <person name="Seno S."/>
            <person name="Sessa L."/>
            <person name="Sheng Y."/>
            <person name="Shibata Y."/>
            <person name="Shimada H."/>
            <person name="Shimada K."/>
            <person name="Silva D."/>
            <person name="Sinclair B."/>
            <person name="Sperling S."/>
            <person name="Stupka E."/>
            <person name="Sugiura K."/>
            <person name="Sultana R."/>
            <person name="Takenaka Y."/>
            <person name="Taki K."/>
            <person name="Tammoja K."/>
            <person name="Tan S.L."/>
            <person name="Tang S."/>
            <person name="Taylor M.S."/>
            <person name="Tegner J."/>
            <person name="Teichmann S.A."/>
            <person name="Ueda H.R."/>
            <person name="van Nimwegen E."/>
            <person name="Verardo R."/>
            <person name="Wei C.L."/>
            <person name="Yagi K."/>
            <person name="Yamanishi H."/>
            <person name="Zabarovsky E."/>
            <person name="Zhu S."/>
            <person name="Zimmer A."/>
            <person name="Hide W."/>
            <person name="Bult C."/>
            <person name="Grimmond S.M."/>
            <person name="Teasdale R.D."/>
            <person name="Liu E.T."/>
            <person name="Brusic V."/>
            <person name="Quackenbush J."/>
            <person name="Wahlestedt C."/>
            <person name="Mattick J.S."/>
            <person name="Hume D.A."/>
            <person name="Kai C."/>
            <person name="Sasaki D."/>
            <person name="Tomaru Y."/>
            <person name="Fukuda S."/>
            <person name="Kanamori-Katayama M."/>
            <person name="Suzuki M."/>
            <person name="Aoki J."/>
            <person name="Arakawa T."/>
            <person name="Iida J."/>
            <person name="Imamura K."/>
            <person name="Itoh M."/>
            <person name="Kato T."/>
            <person name="Kawaji H."/>
            <person name="Kawagashira N."/>
            <person name="Kawashima T."/>
            <person name="Kojima M."/>
            <person name="Kondo S."/>
            <person name="Konno H."/>
            <person name="Nakano K."/>
            <person name="Ninomiya N."/>
            <person name="Nishio T."/>
            <person name="Okada M."/>
            <person name="Plessy C."/>
            <person name="Shibata K."/>
            <person name="Shiraki T."/>
            <person name="Suzuki S."/>
            <person name="Tagami M."/>
            <person name="Waki K."/>
            <person name="Watahiki A."/>
            <person name="Okamura-Oho Y."/>
            <person name="Suzuki H."/>
            <person name="Kawai J."/>
            <person name="Hayashizaki Y."/>
        </authorList>
    </citation>
    <scope>NUCLEOTIDE SEQUENCE [LARGE SCALE MRNA] (ISOFORMS 2; 4 AND 5)</scope>
    <source>
        <strain>C57BL/6J</strain>
        <tissue>Colon</tissue>
        <tissue>Head</tissue>
        <tissue>Testis</tissue>
    </source>
</reference>
<reference key="2">
    <citation type="journal article" date="2009" name="PLoS Biol.">
        <title>Lineage-specific biology revealed by a finished genome assembly of the mouse.</title>
        <authorList>
            <person name="Church D.M."/>
            <person name="Goodstadt L."/>
            <person name="Hillier L.W."/>
            <person name="Zody M.C."/>
            <person name="Goldstein S."/>
            <person name="She X."/>
            <person name="Bult C.J."/>
            <person name="Agarwala R."/>
            <person name="Cherry J.L."/>
            <person name="DiCuccio M."/>
            <person name="Hlavina W."/>
            <person name="Kapustin Y."/>
            <person name="Meric P."/>
            <person name="Maglott D."/>
            <person name="Birtle Z."/>
            <person name="Marques A.C."/>
            <person name="Graves T."/>
            <person name="Zhou S."/>
            <person name="Teague B."/>
            <person name="Potamousis K."/>
            <person name="Churas C."/>
            <person name="Place M."/>
            <person name="Herschleb J."/>
            <person name="Runnheim R."/>
            <person name="Forrest D."/>
            <person name="Amos-Landgraf J."/>
            <person name="Schwartz D.C."/>
            <person name="Cheng Z."/>
            <person name="Lindblad-Toh K."/>
            <person name="Eichler E.E."/>
            <person name="Ponting C.P."/>
        </authorList>
    </citation>
    <scope>NUCLEOTIDE SEQUENCE [LARGE SCALE GENOMIC DNA]</scope>
    <source>
        <strain>C57BL/6J</strain>
    </source>
</reference>
<reference key="3">
    <citation type="journal article" date="2004" name="Genome Res.">
        <title>The status, quality, and expansion of the NIH full-length cDNA project: the Mammalian Gene Collection (MGC).</title>
        <authorList>
            <consortium name="The MGC Project Team"/>
        </authorList>
    </citation>
    <scope>NUCLEOTIDE SEQUENCE [LARGE SCALE MRNA] (ISOFORMS 2 AND 3)</scope>
</reference>
<reference key="4">
    <citation type="journal article" date="2010" name="Cell">
        <title>A tissue-specific atlas of mouse protein phosphorylation and expression.</title>
        <authorList>
            <person name="Huttlin E.L."/>
            <person name="Jedrychowski M.P."/>
            <person name="Elias J.E."/>
            <person name="Goswami T."/>
            <person name="Rad R."/>
            <person name="Beausoleil S.A."/>
            <person name="Villen J."/>
            <person name="Haas W."/>
            <person name="Sowa M.E."/>
            <person name="Gygi S.P."/>
        </authorList>
    </citation>
    <scope>PHOSPHORYLATION [LARGE SCALE ANALYSIS] AT SER-409</scope>
    <scope>IDENTIFICATION BY MASS SPECTROMETRY [LARGE SCALE ANALYSIS]</scope>
    <source>
        <tissue>Brown adipose tissue</tissue>
        <tissue>Heart</tissue>
        <tissue>Kidney</tissue>
        <tissue>Lung</tissue>
        <tissue>Pancreas</tissue>
        <tissue>Spleen</tissue>
    </source>
</reference>
<proteinExistence type="evidence at protein level"/>
<protein>
    <recommendedName>
        <fullName>MAGUK p55 subfamily member 7</fullName>
    </recommendedName>
</protein>
<comment type="function">
    <text evidence="1">Acts as an important adapter that promotes epithelial cell polarity and tight junction formation via its interaction with DLG1. Involved in the assembly of protein complexes at sites of cell-cell contact (By similarity).</text>
</comment>
<comment type="subunit">
    <text evidence="1">Heterodimer; able to heterodimerize via its C-terminal L27 domain with LIN7A, LIN7B and LIN7C. Forms a tripartite complex composed of DLG1, MPP7 and LIN7 (LIN7A or LIN7C). Interacts with DLG1 via its N-terminal L27 domain. Interacts with PALS1 and PATJ (By similarity).</text>
</comment>
<comment type="subcellular location">
    <subcellularLocation>
        <location evidence="2">Membrane</location>
        <topology evidence="2">Peripheral membrane protein</topology>
    </subcellularLocation>
    <subcellularLocation>
        <location evidence="2">Lateral cell membrane</location>
        <topology evidence="2">Peripheral membrane protein</topology>
    </subcellularLocation>
    <subcellularLocation>
        <location evidence="2">Cell junction</location>
        <location evidence="2">Tight junction</location>
    </subcellularLocation>
    <subcellularLocation>
        <location evidence="2">Cell junction</location>
        <location evidence="2">Adherens junction</location>
    </subcellularLocation>
    <subcellularLocation>
        <location evidence="2">Cytoplasm</location>
        <location evidence="2">Cell cortex</location>
    </subcellularLocation>
    <subcellularLocation>
        <location evidence="2">Cytoplasm</location>
    </subcellularLocation>
    <text evidence="2">In epidermal cells, detected primarily at the lateral cell membrane.</text>
</comment>
<comment type="alternative products">
    <event type="alternative splicing"/>
    <isoform>
        <id>Q8BVD5-1</id>
        <name>1</name>
        <sequence type="displayed"/>
    </isoform>
    <isoform>
        <id>Q8BVD5-2</id>
        <name>2</name>
        <sequence type="described" ref="VSP_031579 VSP_031580"/>
    </isoform>
    <isoform>
        <id>Q8BVD5-3</id>
        <name>3</name>
        <sequence type="described" ref="VSP_031574 VSP_031579 VSP_031580"/>
    </isoform>
    <isoform>
        <id>Q8BVD5-4</id>
        <name>4</name>
        <sequence type="described" ref="VSP_031575 VSP_031578"/>
    </isoform>
    <isoform>
        <id>Q8BVD5-5</id>
        <name>5</name>
        <sequence type="described" ref="VSP_031576 VSP_031577"/>
    </isoform>
</comment>
<comment type="domain">
    <text evidence="2">The phospho-regulated basic and hydrophobic (PRBH) motif is sufficient and important for interaction with phospholipids permitting cortical localization (By similarity). Phosphorylation of the PRBH motif by aPKC inhibits the association of the protein with the cortical membrane (By similarity).</text>
</comment>
<comment type="PTM">
    <text evidence="2">Phosphorylated by aPKC which promotes dissociation from the cell cortex.</text>
</comment>
<comment type="similarity">
    <text evidence="9">Belongs to the MAGUK family.</text>
</comment>
<gene>
    <name type="primary">Mpp7</name>
</gene>